<feature type="chain" id="PRO_0000226446" description="ATP-dependent Clp protease proteolytic subunit">
    <location>
        <begin position="1"/>
        <end position="200"/>
    </location>
</feature>
<feature type="active site" description="Nucleophile" evidence="1">
    <location>
        <position position="97"/>
    </location>
</feature>
<feature type="active site" evidence="1">
    <location>
        <position position="122"/>
    </location>
</feature>
<proteinExistence type="inferred from homology"/>
<keyword id="KW-0963">Cytoplasm</keyword>
<keyword id="KW-0378">Hydrolase</keyword>
<keyword id="KW-0645">Protease</keyword>
<keyword id="KW-1185">Reference proteome</keyword>
<keyword id="KW-0720">Serine protease</keyword>
<accession>Q30Z79</accession>
<comment type="function">
    <text evidence="1">Cleaves peptides in various proteins in a process that requires ATP hydrolysis. Has a chymotrypsin-like activity. Plays a major role in the degradation of misfolded proteins.</text>
</comment>
<comment type="catalytic activity">
    <reaction evidence="1">
        <text>Hydrolysis of proteins to small peptides in the presence of ATP and magnesium. alpha-casein is the usual test substrate. In the absence of ATP, only oligopeptides shorter than five residues are hydrolyzed (such as succinyl-Leu-Tyr-|-NHMec, and Leu-Tyr-Leu-|-Tyr-Trp, in which cleavage of the -Tyr-|-Leu- and -Tyr-|-Trp bonds also occurs).</text>
        <dbReference type="EC" id="3.4.21.92"/>
    </reaction>
</comment>
<comment type="subunit">
    <text evidence="1">Fourteen ClpP subunits assemble into 2 heptameric rings which stack back to back to give a disk-like structure with a central cavity, resembling the structure of eukaryotic proteasomes.</text>
</comment>
<comment type="subcellular location">
    <subcellularLocation>
        <location evidence="1">Cytoplasm</location>
    </subcellularLocation>
</comment>
<comment type="similarity">
    <text evidence="1">Belongs to the peptidase S14 family.</text>
</comment>
<protein>
    <recommendedName>
        <fullName evidence="1">ATP-dependent Clp protease proteolytic subunit</fullName>
        <ecNumber evidence="1">3.4.21.92</ecNumber>
    </recommendedName>
    <alternativeName>
        <fullName evidence="1">Endopeptidase Clp</fullName>
    </alternativeName>
</protein>
<organism>
    <name type="scientific">Oleidesulfovibrio alaskensis (strain ATCC BAA-1058 / DSM 17464 / G20)</name>
    <name type="common">Desulfovibrio alaskensis</name>
    <dbReference type="NCBI Taxonomy" id="207559"/>
    <lineage>
        <taxon>Bacteria</taxon>
        <taxon>Pseudomonadati</taxon>
        <taxon>Thermodesulfobacteriota</taxon>
        <taxon>Desulfovibrionia</taxon>
        <taxon>Desulfovibrionales</taxon>
        <taxon>Desulfovibrionaceae</taxon>
        <taxon>Oleidesulfovibrio</taxon>
    </lineage>
</organism>
<evidence type="ECO:0000255" key="1">
    <source>
        <dbReference type="HAMAP-Rule" id="MF_00444"/>
    </source>
</evidence>
<reference key="1">
    <citation type="journal article" date="2011" name="J. Bacteriol.">
        <title>Complete genome sequence and updated annotation of Desulfovibrio alaskensis G20.</title>
        <authorList>
            <person name="Hauser L.J."/>
            <person name="Land M.L."/>
            <person name="Brown S.D."/>
            <person name="Larimer F."/>
            <person name="Keller K.L."/>
            <person name="Rapp-Giles B.J."/>
            <person name="Price M.N."/>
            <person name="Lin M."/>
            <person name="Bruce D.C."/>
            <person name="Detter J.C."/>
            <person name="Tapia R."/>
            <person name="Han C.S."/>
            <person name="Goodwin L.A."/>
            <person name="Cheng J.F."/>
            <person name="Pitluck S."/>
            <person name="Copeland A."/>
            <person name="Lucas S."/>
            <person name="Nolan M."/>
            <person name="Lapidus A.L."/>
            <person name="Palumbo A.V."/>
            <person name="Wall J.D."/>
        </authorList>
    </citation>
    <scope>NUCLEOTIDE SEQUENCE [LARGE SCALE GENOMIC DNA]</scope>
    <source>
        <strain>ATCC BAA-1058 / DSM 17464 / G20</strain>
    </source>
</reference>
<sequence length="200" mass="22109">MPIPMVIESTGRAERAYDIYSRLLKDRIILLGTPVDDNVASLICAQLLFLESENPEKEIYLYINSPGGVVTAGLAIYDTMQYISAPVATLCMGQAASMGAFLLAAGQPGMRFALPNSRIMIHQPMGGAQGQATDIDIQAREILRLKDRLNEILSRHTGQPLEKIVEHTDRDYFMGPENAKNFGIIDRILTSRKDVEKDGK</sequence>
<name>CLPP_OLEA2</name>
<gene>
    <name evidence="1" type="primary">clpP</name>
    <name type="ordered locus">Dde_2220</name>
</gene>
<dbReference type="EC" id="3.4.21.92" evidence="1"/>
<dbReference type="EMBL" id="CP000112">
    <property type="protein sequence ID" value="ABB39017.1"/>
    <property type="molecule type" value="Genomic_DNA"/>
</dbReference>
<dbReference type="RefSeq" id="WP_011368112.1">
    <property type="nucleotide sequence ID" value="NC_007519.1"/>
</dbReference>
<dbReference type="SMR" id="Q30Z79"/>
<dbReference type="STRING" id="207559.Dde_2220"/>
<dbReference type="MEROPS" id="S14.001"/>
<dbReference type="KEGG" id="dde:Dde_2220"/>
<dbReference type="eggNOG" id="COG0740">
    <property type="taxonomic scope" value="Bacteria"/>
</dbReference>
<dbReference type="HOGENOM" id="CLU_058707_3_2_7"/>
<dbReference type="Proteomes" id="UP000002710">
    <property type="component" value="Chromosome"/>
</dbReference>
<dbReference type="GO" id="GO:0005737">
    <property type="term" value="C:cytoplasm"/>
    <property type="evidence" value="ECO:0007669"/>
    <property type="project" value="UniProtKB-SubCell"/>
</dbReference>
<dbReference type="GO" id="GO:0009368">
    <property type="term" value="C:endopeptidase Clp complex"/>
    <property type="evidence" value="ECO:0007669"/>
    <property type="project" value="TreeGrafter"/>
</dbReference>
<dbReference type="GO" id="GO:0004176">
    <property type="term" value="F:ATP-dependent peptidase activity"/>
    <property type="evidence" value="ECO:0007669"/>
    <property type="project" value="InterPro"/>
</dbReference>
<dbReference type="GO" id="GO:0051117">
    <property type="term" value="F:ATPase binding"/>
    <property type="evidence" value="ECO:0007669"/>
    <property type="project" value="TreeGrafter"/>
</dbReference>
<dbReference type="GO" id="GO:0004252">
    <property type="term" value="F:serine-type endopeptidase activity"/>
    <property type="evidence" value="ECO:0007669"/>
    <property type="project" value="UniProtKB-UniRule"/>
</dbReference>
<dbReference type="GO" id="GO:0006515">
    <property type="term" value="P:protein quality control for misfolded or incompletely synthesized proteins"/>
    <property type="evidence" value="ECO:0007669"/>
    <property type="project" value="TreeGrafter"/>
</dbReference>
<dbReference type="CDD" id="cd07017">
    <property type="entry name" value="S14_ClpP_2"/>
    <property type="match status" value="1"/>
</dbReference>
<dbReference type="FunFam" id="3.90.226.10:FF:000001">
    <property type="entry name" value="ATP-dependent Clp protease proteolytic subunit"/>
    <property type="match status" value="1"/>
</dbReference>
<dbReference type="Gene3D" id="3.90.226.10">
    <property type="entry name" value="2-enoyl-CoA Hydratase, Chain A, domain 1"/>
    <property type="match status" value="1"/>
</dbReference>
<dbReference type="HAMAP" id="MF_00444">
    <property type="entry name" value="ClpP"/>
    <property type="match status" value="1"/>
</dbReference>
<dbReference type="InterPro" id="IPR001907">
    <property type="entry name" value="ClpP"/>
</dbReference>
<dbReference type="InterPro" id="IPR029045">
    <property type="entry name" value="ClpP/crotonase-like_dom_sf"/>
</dbReference>
<dbReference type="InterPro" id="IPR023562">
    <property type="entry name" value="ClpP/TepA"/>
</dbReference>
<dbReference type="InterPro" id="IPR033135">
    <property type="entry name" value="ClpP_His_AS"/>
</dbReference>
<dbReference type="InterPro" id="IPR018215">
    <property type="entry name" value="ClpP_Ser_AS"/>
</dbReference>
<dbReference type="NCBIfam" id="TIGR00493">
    <property type="entry name" value="clpP"/>
    <property type="match status" value="1"/>
</dbReference>
<dbReference type="NCBIfam" id="NF001368">
    <property type="entry name" value="PRK00277.1"/>
    <property type="match status" value="1"/>
</dbReference>
<dbReference type="NCBIfam" id="NF009205">
    <property type="entry name" value="PRK12553.1"/>
    <property type="match status" value="1"/>
</dbReference>
<dbReference type="PANTHER" id="PTHR10381">
    <property type="entry name" value="ATP-DEPENDENT CLP PROTEASE PROTEOLYTIC SUBUNIT"/>
    <property type="match status" value="1"/>
</dbReference>
<dbReference type="PANTHER" id="PTHR10381:SF11">
    <property type="entry name" value="ATP-DEPENDENT CLP PROTEASE PROTEOLYTIC SUBUNIT, MITOCHONDRIAL"/>
    <property type="match status" value="1"/>
</dbReference>
<dbReference type="Pfam" id="PF00574">
    <property type="entry name" value="CLP_protease"/>
    <property type="match status" value="1"/>
</dbReference>
<dbReference type="PRINTS" id="PR00127">
    <property type="entry name" value="CLPPROTEASEP"/>
</dbReference>
<dbReference type="SUPFAM" id="SSF52096">
    <property type="entry name" value="ClpP/crotonase"/>
    <property type="match status" value="1"/>
</dbReference>
<dbReference type="PROSITE" id="PS00382">
    <property type="entry name" value="CLP_PROTEASE_HIS"/>
    <property type="match status" value="1"/>
</dbReference>
<dbReference type="PROSITE" id="PS00381">
    <property type="entry name" value="CLP_PROTEASE_SER"/>
    <property type="match status" value="1"/>
</dbReference>